<keyword id="KW-0687">Ribonucleoprotein</keyword>
<keyword id="KW-0689">Ribosomal protein</keyword>
<evidence type="ECO:0000255" key="1">
    <source>
        <dbReference type="HAMAP-Rule" id="MF_00619"/>
    </source>
</evidence>
<name>RRP3_CYAP4</name>
<protein>
    <recommendedName>
        <fullName evidence="1">Probable small ribosomal subunit protein cS23</fullName>
    </recommendedName>
    <alternativeName>
        <fullName>Probable 30S ribosomal protein PSRP-3</fullName>
    </alternativeName>
    <alternativeName>
        <fullName>Ycf65-like protein</fullName>
    </alternativeName>
</protein>
<feature type="chain" id="PRO_1000212283" description="Probable small ribosomal subunit protein cS23">
    <location>
        <begin position="1"/>
        <end position="109"/>
    </location>
</feature>
<organism>
    <name type="scientific">Cyanothece sp. (strain PCC 7425 / ATCC 29141)</name>
    <dbReference type="NCBI Taxonomy" id="395961"/>
    <lineage>
        <taxon>Bacteria</taxon>
        <taxon>Bacillati</taxon>
        <taxon>Cyanobacteriota</taxon>
        <taxon>Cyanophyceae</taxon>
        <taxon>Gomontiellales</taxon>
        <taxon>Cyanothecaceae</taxon>
        <taxon>Cyanothece</taxon>
    </lineage>
</organism>
<dbReference type="EMBL" id="CP001344">
    <property type="protein sequence ID" value="ACL42857.1"/>
    <property type="molecule type" value="Genomic_DNA"/>
</dbReference>
<dbReference type="SMR" id="B8HTT7"/>
<dbReference type="STRING" id="395961.Cyan7425_0465"/>
<dbReference type="KEGG" id="cyn:Cyan7425_0465"/>
<dbReference type="eggNOG" id="ENOG503137T">
    <property type="taxonomic scope" value="Bacteria"/>
</dbReference>
<dbReference type="HOGENOM" id="CLU_132693_1_0_3"/>
<dbReference type="OrthoDB" id="486850at2"/>
<dbReference type="GO" id="GO:1990904">
    <property type="term" value="C:ribonucleoprotein complex"/>
    <property type="evidence" value="ECO:0007669"/>
    <property type="project" value="UniProtKB-KW"/>
</dbReference>
<dbReference type="GO" id="GO:0005840">
    <property type="term" value="C:ribosome"/>
    <property type="evidence" value="ECO:0007669"/>
    <property type="project" value="UniProtKB-KW"/>
</dbReference>
<dbReference type="GO" id="GO:0003735">
    <property type="term" value="F:structural constituent of ribosome"/>
    <property type="evidence" value="ECO:0007669"/>
    <property type="project" value="InterPro"/>
</dbReference>
<dbReference type="GO" id="GO:0006412">
    <property type="term" value="P:translation"/>
    <property type="evidence" value="ECO:0007669"/>
    <property type="project" value="UniProtKB-UniRule"/>
</dbReference>
<dbReference type="Gene3D" id="3.30.390.140">
    <property type="match status" value="1"/>
</dbReference>
<dbReference type="HAMAP" id="MF_00619">
    <property type="entry name" value="Ribosomal_plastid_cS23"/>
    <property type="match status" value="1"/>
</dbReference>
<dbReference type="InterPro" id="IPR038447">
    <property type="entry name" value="PSRP-3/Ycf65_sf"/>
</dbReference>
<dbReference type="InterPro" id="IPR006924">
    <property type="entry name" value="Ribosomal_PSRP3/Ycf65"/>
</dbReference>
<dbReference type="NCBIfam" id="NF002740">
    <property type="entry name" value="PRK02724.1"/>
    <property type="match status" value="1"/>
</dbReference>
<dbReference type="PANTHER" id="PTHR35108">
    <property type="entry name" value="30S RIBOSOMAL PROTEIN 3, CHLOROPLASTIC"/>
    <property type="match status" value="1"/>
</dbReference>
<dbReference type="PANTHER" id="PTHR35108:SF1">
    <property type="entry name" value="OS04G0461100 PROTEIN"/>
    <property type="match status" value="1"/>
</dbReference>
<dbReference type="Pfam" id="PF04839">
    <property type="entry name" value="PSRP-3_Ycf65"/>
    <property type="match status" value="1"/>
</dbReference>
<accession>B8HTT7</accession>
<comment type="function">
    <text evidence="1">Probably a ribosomal protein or a ribosome-associated protein.</text>
</comment>
<comment type="subunit">
    <text evidence="1">Part of the 30S ribosomal subunit.</text>
</comment>
<comment type="similarity">
    <text evidence="1">Belongs to the chloroplast-specific ribosomal protein cS23 family.</text>
</comment>
<sequence>MPVQTILEVSLSQFILKVLWLDSNVALAVDQVVGKGTSPLTSYFFWPRADAWEQLKTELEKKTWISEADRIALLNRATDIINYWQEEGRNRPLAEAQSRFPDITFVGTA</sequence>
<gene>
    <name type="ordered locus">Cyan7425_0465</name>
</gene>
<proteinExistence type="inferred from homology"/>
<reference key="1">
    <citation type="journal article" date="2011" name="MBio">
        <title>Novel metabolic attributes of the genus Cyanothece, comprising a group of unicellular nitrogen-fixing Cyanobacteria.</title>
        <authorList>
            <person name="Bandyopadhyay A."/>
            <person name="Elvitigala T."/>
            <person name="Welsh E."/>
            <person name="Stockel J."/>
            <person name="Liberton M."/>
            <person name="Min H."/>
            <person name="Sherman L.A."/>
            <person name="Pakrasi H.B."/>
        </authorList>
    </citation>
    <scope>NUCLEOTIDE SEQUENCE [LARGE SCALE GENOMIC DNA]</scope>
    <source>
        <strain>PCC 7425 / ATCC 29141</strain>
    </source>
</reference>